<comment type="function">
    <text evidence="1">Removes the formyl group from the N-terminal Met of newly synthesized proteins. Requires at least a dipeptide for an efficient rate of reaction. N-terminal L-methionine is a prerequisite for activity but the enzyme has broad specificity at other positions.</text>
</comment>
<comment type="catalytic activity">
    <reaction evidence="1">
        <text>N-terminal N-formyl-L-methionyl-[peptide] + H2O = N-terminal L-methionyl-[peptide] + formate</text>
        <dbReference type="Rhea" id="RHEA:24420"/>
        <dbReference type="Rhea" id="RHEA-COMP:10639"/>
        <dbReference type="Rhea" id="RHEA-COMP:10640"/>
        <dbReference type="ChEBI" id="CHEBI:15377"/>
        <dbReference type="ChEBI" id="CHEBI:15740"/>
        <dbReference type="ChEBI" id="CHEBI:49298"/>
        <dbReference type="ChEBI" id="CHEBI:64731"/>
        <dbReference type="EC" id="3.5.1.88"/>
    </reaction>
</comment>
<comment type="cofactor">
    <cofactor evidence="1">
        <name>Fe(2+)</name>
        <dbReference type="ChEBI" id="CHEBI:29033"/>
    </cofactor>
    <text evidence="1">Binds 1 Fe(2+) ion.</text>
</comment>
<comment type="similarity">
    <text evidence="1">Belongs to the polypeptide deformylase family.</text>
</comment>
<keyword id="KW-0378">Hydrolase</keyword>
<keyword id="KW-0408">Iron</keyword>
<keyword id="KW-0479">Metal-binding</keyword>
<keyword id="KW-0648">Protein biosynthesis</keyword>
<keyword id="KW-1185">Reference proteome</keyword>
<reference key="1">
    <citation type="journal article" date="2005" name="PLoS Genet.">
        <title>Life in hot carbon monoxide: the complete genome sequence of Carboxydothermus hydrogenoformans Z-2901.</title>
        <authorList>
            <person name="Wu M."/>
            <person name="Ren Q."/>
            <person name="Durkin A.S."/>
            <person name="Daugherty S.C."/>
            <person name="Brinkac L.M."/>
            <person name="Dodson R.J."/>
            <person name="Madupu R."/>
            <person name="Sullivan S.A."/>
            <person name="Kolonay J.F."/>
            <person name="Nelson W.C."/>
            <person name="Tallon L.J."/>
            <person name="Jones K.M."/>
            <person name="Ulrich L.E."/>
            <person name="Gonzalez J.M."/>
            <person name="Zhulin I.B."/>
            <person name="Robb F.T."/>
            <person name="Eisen J.A."/>
        </authorList>
    </citation>
    <scope>NUCLEOTIDE SEQUENCE [LARGE SCALE GENOMIC DNA]</scope>
    <source>
        <strain>ATCC BAA-161 / DSM 6008 / Z-2901</strain>
    </source>
</reference>
<evidence type="ECO:0000255" key="1">
    <source>
        <dbReference type="HAMAP-Rule" id="MF_00163"/>
    </source>
</evidence>
<sequence length="152" mass="16525">MAVYKVVEIGDPILKEIAKPIKEITPNIIKLLENMADTMYAYNGVGLAAPQIGVSKRAIVVDVGEGLIELINPEIIEVSGEEKDIEGCLSVPGVQGEVVRAKKVTVKGLNRYGEEIVIPAEGLLARAFQHEIDHLNGILFVEKADNIVRKGR</sequence>
<protein>
    <recommendedName>
        <fullName evidence="1">Peptide deformylase</fullName>
        <shortName evidence="1">PDF</shortName>
        <ecNumber evidence="1">3.5.1.88</ecNumber>
    </recommendedName>
    <alternativeName>
        <fullName evidence="1">Polypeptide deformylase</fullName>
    </alternativeName>
</protein>
<name>DEF_CARHZ</name>
<proteinExistence type="inferred from homology"/>
<organism>
    <name type="scientific">Carboxydothermus hydrogenoformans (strain ATCC BAA-161 / DSM 6008 / Z-2901)</name>
    <dbReference type="NCBI Taxonomy" id="246194"/>
    <lineage>
        <taxon>Bacteria</taxon>
        <taxon>Bacillati</taxon>
        <taxon>Bacillota</taxon>
        <taxon>Clostridia</taxon>
        <taxon>Thermoanaerobacterales</taxon>
        <taxon>Thermoanaerobacteraceae</taxon>
        <taxon>Carboxydothermus</taxon>
    </lineage>
</organism>
<feature type="chain" id="PRO_0000301015" description="Peptide deformylase">
    <location>
        <begin position="1"/>
        <end position="152"/>
    </location>
</feature>
<feature type="active site" evidence="1">
    <location>
        <position position="131"/>
    </location>
</feature>
<feature type="binding site" evidence="1">
    <location>
        <position position="88"/>
    </location>
    <ligand>
        <name>Fe cation</name>
        <dbReference type="ChEBI" id="CHEBI:24875"/>
    </ligand>
</feature>
<feature type="binding site" evidence="1">
    <location>
        <position position="130"/>
    </location>
    <ligand>
        <name>Fe cation</name>
        <dbReference type="ChEBI" id="CHEBI:24875"/>
    </ligand>
</feature>
<feature type="binding site" evidence="1">
    <location>
        <position position="134"/>
    </location>
    <ligand>
        <name>Fe cation</name>
        <dbReference type="ChEBI" id="CHEBI:24875"/>
    </ligand>
</feature>
<dbReference type="EC" id="3.5.1.88" evidence="1"/>
<dbReference type="EMBL" id="CP000141">
    <property type="protein sequence ID" value="ABB15321.1"/>
    <property type="molecule type" value="Genomic_DNA"/>
</dbReference>
<dbReference type="RefSeq" id="WP_011344391.1">
    <property type="nucleotide sequence ID" value="NC_007503.1"/>
</dbReference>
<dbReference type="SMR" id="Q3AC18"/>
<dbReference type="FunCoup" id="Q3AC18">
    <property type="interactions" value="391"/>
</dbReference>
<dbReference type="STRING" id="246194.CHY_1484"/>
<dbReference type="KEGG" id="chy:CHY_1484"/>
<dbReference type="eggNOG" id="COG0242">
    <property type="taxonomic scope" value="Bacteria"/>
</dbReference>
<dbReference type="HOGENOM" id="CLU_061901_4_2_9"/>
<dbReference type="InParanoid" id="Q3AC18"/>
<dbReference type="OrthoDB" id="9784988at2"/>
<dbReference type="Proteomes" id="UP000002706">
    <property type="component" value="Chromosome"/>
</dbReference>
<dbReference type="GO" id="GO:0046872">
    <property type="term" value="F:metal ion binding"/>
    <property type="evidence" value="ECO:0007669"/>
    <property type="project" value="UniProtKB-KW"/>
</dbReference>
<dbReference type="GO" id="GO:0042586">
    <property type="term" value="F:peptide deformylase activity"/>
    <property type="evidence" value="ECO:0007669"/>
    <property type="project" value="UniProtKB-UniRule"/>
</dbReference>
<dbReference type="GO" id="GO:0043686">
    <property type="term" value="P:co-translational protein modification"/>
    <property type="evidence" value="ECO:0007669"/>
    <property type="project" value="TreeGrafter"/>
</dbReference>
<dbReference type="GO" id="GO:0006412">
    <property type="term" value="P:translation"/>
    <property type="evidence" value="ECO:0007669"/>
    <property type="project" value="UniProtKB-UniRule"/>
</dbReference>
<dbReference type="CDD" id="cd00487">
    <property type="entry name" value="Pep_deformylase"/>
    <property type="match status" value="1"/>
</dbReference>
<dbReference type="Gene3D" id="3.90.45.10">
    <property type="entry name" value="Peptide deformylase"/>
    <property type="match status" value="1"/>
</dbReference>
<dbReference type="HAMAP" id="MF_00163">
    <property type="entry name" value="Pep_deformylase"/>
    <property type="match status" value="1"/>
</dbReference>
<dbReference type="InterPro" id="IPR023635">
    <property type="entry name" value="Peptide_deformylase"/>
</dbReference>
<dbReference type="InterPro" id="IPR036821">
    <property type="entry name" value="Peptide_deformylase_sf"/>
</dbReference>
<dbReference type="NCBIfam" id="TIGR00079">
    <property type="entry name" value="pept_deformyl"/>
    <property type="match status" value="1"/>
</dbReference>
<dbReference type="NCBIfam" id="NF001159">
    <property type="entry name" value="PRK00150.1-3"/>
    <property type="match status" value="1"/>
</dbReference>
<dbReference type="PANTHER" id="PTHR10458">
    <property type="entry name" value="PEPTIDE DEFORMYLASE"/>
    <property type="match status" value="1"/>
</dbReference>
<dbReference type="PANTHER" id="PTHR10458:SF22">
    <property type="entry name" value="PEPTIDE DEFORMYLASE"/>
    <property type="match status" value="1"/>
</dbReference>
<dbReference type="Pfam" id="PF01327">
    <property type="entry name" value="Pep_deformylase"/>
    <property type="match status" value="1"/>
</dbReference>
<dbReference type="PIRSF" id="PIRSF004749">
    <property type="entry name" value="Pep_def"/>
    <property type="match status" value="1"/>
</dbReference>
<dbReference type="PRINTS" id="PR01576">
    <property type="entry name" value="PDEFORMYLASE"/>
</dbReference>
<dbReference type="SUPFAM" id="SSF56420">
    <property type="entry name" value="Peptide deformylase"/>
    <property type="match status" value="1"/>
</dbReference>
<gene>
    <name evidence="1" type="primary">def</name>
    <name type="ordered locus">CHY_1484</name>
</gene>
<accession>Q3AC18</accession>